<sequence>MADTTGRIPLWIIGTVAGILVIGLIGIFFYGAYSGLGSSL</sequence>
<comment type="function">
    <text evidence="1">One of the components of the core complex of photosystem II (PSII). PSII is a light-driven water:plastoquinone oxidoreductase that uses light energy to abstract electrons from H(2)O, generating O(2) and a proton gradient subsequently used for ATP formation. It consists of a core antenna complex that captures photons, and an electron transfer chain that converts photonic excitation into a charge separation.</text>
</comment>
<comment type="subunit">
    <text evidence="1">PSII is composed of 1 copy each of membrane proteins PsbA, PsbB, PsbC, PsbD, PsbE, PsbF, PsbH, PsbI, PsbJ, PsbK, PsbL, PsbM, PsbT, PsbX, PsbY, PsbZ, Psb30/Ycf12, at least 3 peripheral proteins of the oxygen-evolving complex and a large number of cofactors. It forms dimeric complexes.</text>
</comment>
<comment type="subcellular location">
    <subcellularLocation>
        <location evidence="1">Plastid</location>
        <location evidence="1">Chloroplast thylakoid membrane</location>
        <topology evidence="1">Single-pass membrane protein</topology>
    </subcellularLocation>
</comment>
<comment type="similarity">
    <text evidence="1">Belongs to the PsbJ family.</text>
</comment>
<keyword id="KW-0150">Chloroplast</keyword>
<keyword id="KW-0472">Membrane</keyword>
<keyword id="KW-0602">Photosynthesis</keyword>
<keyword id="KW-0604">Photosystem II</keyword>
<keyword id="KW-0934">Plastid</keyword>
<keyword id="KW-0674">Reaction center</keyword>
<keyword id="KW-0793">Thylakoid</keyword>
<keyword id="KW-0812">Transmembrane</keyword>
<keyword id="KW-1133">Transmembrane helix</keyword>
<proteinExistence type="inferred from homology"/>
<gene>
    <name evidence="1" type="primary">psbJ</name>
</gene>
<name>PSBJ_OENEH</name>
<reference key="1">
    <citation type="journal article" date="2000" name="Mol. Gen. Genet.">
        <title>Complete nucleotide sequence of the Oenothera elata plastid chromosome, representing plastome I of the five distinguishable Euoenothera plastomes.</title>
        <authorList>
            <person name="Hupfer H."/>
            <person name="Swiatek M."/>
            <person name="Hornung S."/>
            <person name="Herrmann R.G."/>
            <person name="Maier R.M."/>
            <person name="Chiu W.-L."/>
            <person name="Sears B."/>
        </authorList>
    </citation>
    <scope>NUCLEOTIDE SEQUENCE [LARGE SCALE GENOMIC DNA]</scope>
    <source>
        <strain>cv. Johansen</strain>
    </source>
</reference>
<geneLocation type="chloroplast"/>
<feature type="chain" id="PRO_0000216605" description="Photosystem II reaction center protein J">
    <location>
        <begin position="1"/>
        <end position="40"/>
    </location>
</feature>
<feature type="transmembrane region" description="Helical" evidence="1">
    <location>
        <begin position="8"/>
        <end position="28"/>
    </location>
</feature>
<protein>
    <recommendedName>
        <fullName evidence="1">Photosystem II reaction center protein J</fullName>
        <shortName evidence="1">PSII-J</shortName>
    </recommendedName>
</protein>
<dbReference type="EMBL" id="AJ271079">
    <property type="protein sequence ID" value="CAB67171.1"/>
    <property type="molecule type" value="Genomic_DNA"/>
</dbReference>
<dbReference type="RefSeq" id="NP_084706.1">
    <property type="nucleotide sequence ID" value="NC_002693.2"/>
</dbReference>
<dbReference type="SMR" id="Q9MTK7"/>
<dbReference type="GeneID" id="802705"/>
<dbReference type="GO" id="GO:0009535">
    <property type="term" value="C:chloroplast thylakoid membrane"/>
    <property type="evidence" value="ECO:0007669"/>
    <property type="project" value="UniProtKB-SubCell"/>
</dbReference>
<dbReference type="GO" id="GO:0009539">
    <property type="term" value="C:photosystem II reaction center"/>
    <property type="evidence" value="ECO:0007669"/>
    <property type="project" value="InterPro"/>
</dbReference>
<dbReference type="GO" id="GO:0015979">
    <property type="term" value="P:photosynthesis"/>
    <property type="evidence" value="ECO:0007669"/>
    <property type="project" value="UniProtKB-UniRule"/>
</dbReference>
<dbReference type="Gene3D" id="6.10.250.2070">
    <property type="match status" value="1"/>
</dbReference>
<dbReference type="HAMAP" id="MF_01305">
    <property type="entry name" value="PSII_PsbJ"/>
    <property type="match status" value="1"/>
</dbReference>
<dbReference type="InterPro" id="IPR002682">
    <property type="entry name" value="PSII_PsbJ"/>
</dbReference>
<dbReference type="InterPro" id="IPR037267">
    <property type="entry name" value="PSII_PsbJ_sf"/>
</dbReference>
<dbReference type="NCBIfam" id="NF002722">
    <property type="entry name" value="PRK02565.1"/>
    <property type="match status" value="1"/>
</dbReference>
<dbReference type="PANTHER" id="PTHR34812">
    <property type="entry name" value="PHOTOSYSTEM II REACTION CENTER PROTEIN J"/>
    <property type="match status" value="1"/>
</dbReference>
<dbReference type="PANTHER" id="PTHR34812:SF3">
    <property type="entry name" value="PHOTOSYSTEM II REACTION CENTER PROTEIN J"/>
    <property type="match status" value="1"/>
</dbReference>
<dbReference type="Pfam" id="PF01788">
    <property type="entry name" value="PsbJ"/>
    <property type="match status" value="1"/>
</dbReference>
<dbReference type="SUPFAM" id="SSF161021">
    <property type="entry name" value="Photosystem II reaction center protein J, PsbJ"/>
    <property type="match status" value="1"/>
</dbReference>
<organism>
    <name type="scientific">Oenothera elata subsp. hookeri</name>
    <name type="common">Hooker's evening primrose</name>
    <name type="synonym">Oenothera hookeri</name>
    <dbReference type="NCBI Taxonomy" id="85636"/>
    <lineage>
        <taxon>Eukaryota</taxon>
        <taxon>Viridiplantae</taxon>
        <taxon>Streptophyta</taxon>
        <taxon>Embryophyta</taxon>
        <taxon>Tracheophyta</taxon>
        <taxon>Spermatophyta</taxon>
        <taxon>Magnoliopsida</taxon>
        <taxon>eudicotyledons</taxon>
        <taxon>Gunneridae</taxon>
        <taxon>Pentapetalae</taxon>
        <taxon>rosids</taxon>
        <taxon>malvids</taxon>
        <taxon>Myrtales</taxon>
        <taxon>Onagraceae</taxon>
        <taxon>Onagroideae</taxon>
        <taxon>Onagreae</taxon>
        <taxon>Oenothera</taxon>
    </lineage>
</organism>
<accession>Q9MTK7</accession>
<evidence type="ECO:0000255" key="1">
    <source>
        <dbReference type="HAMAP-Rule" id="MF_01305"/>
    </source>
</evidence>